<organism>
    <name type="scientific">Staphylococcus epidermidis (strain ATCC 12228 / FDA PCI 1200)</name>
    <dbReference type="NCBI Taxonomy" id="176280"/>
    <lineage>
        <taxon>Bacteria</taxon>
        <taxon>Bacillati</taxon>
        <taxon>Bacillota</taxon>
        <taxon>Bacilli</taxon>
        <taxon>Bacillales</taxon>
        <taxon>Staphylococcaceae</taxon>
        <taxon>Staphylococcus</taxon>
    </lineage>
</organism>
<sequence length="215" mass="24022">MNIILMGLPGAGKGTQASEIVKKFPIPHISTGDMFRKAIKDETDLGKEAKSYMDRGELVPDEVTVGIVKERISEDDAKKGFLLDGFPRTIDQAESLSQIMSELDREIDAVINIEVPEEELMNRLTGRRICEKCGTTYHLVFNPPKVDGICDIDGGKLYQREDDNPETVSNRLSVNVKQSKPILEYYNNKGVLKNIDGSKDIDEVTNDVIDILDHL</sequence>
<keyword id="KW-0067">ATP-binding</keyword>
<keyword id="KW-0963">Cytoplasm</keyword>
<keyword id="KW-0418">Kinase</keyword>
<keyword id="KW-0479">Metal-binding</keyword>
<keyword id="KW-0545">Nucleotide biosynthesis</keyword>
<keyword id="KW-0547">Nucleotide-binding</keyword>
<keyword id="KW-0808">Transferase</keyword>
<keyword id="KW-0862">Zinc</keyword>
<reference key="1">
    <citation type="journal article" date="2003" name="Mol. Microbiol.">
        <title>Genome-based analysis of virulence genes in a non-biofilm-forming Staphylococcus epidermidis strain (ATCC 12228).</title>
        <authorList>
            <person name="Zhang Y.-Q."/>
            <person name="Ren S.-X."/>
            <person name="Li H.-L."/>
            <person name="Wang Y.-X."/>
            <person name="Fu G."/>
            <person name="Yang J."/>
            <person name="Qin Z.-Q."/>
            <person name="Miao Y.-G."/>
            <person name="Wang W.-Y."/>
            <person name="Chen R.-S."/>
            <person name="Shen Y."/>
            <person name="Chen Z."/>
            <person name="Yuan Z.-H."/>
            <person name="Zhao G.-P."/>
            <person name="Qu D."/>
            <person name="Danchin A."/>
            <person name="Wen Y.-M."/>
        </authorList>
    </citation>
    <scope>NUCLEOTIDE SEQUENCE [LARGE SCALE GENOMIC DNA]</scope>
    <source>
        <strain>ATCC 12228 / FDA PCI 1200</strain>
    </source>
</reference>
<protein>
    <recommendedName>
        <fullName evidence="1">Adenylate kinase</fullName>
        <shortName evidence="1">AK</shortName>
        <ecNumber evidence="1">2.7.4.3</ecNumber>
    </recommendedName>
    <alternativeName>
        <fullName evidence="1">ATP-AMP transphosphorylase</fullName>
    </alternativeName>
    <alternativeName>
        <fullName evidence="1">ATP:AMP phosphotransferase</fullName>
    </alternativeName>
    <alternativeName>
        <fullName evidence="1">Adenylate monophosphate kinase</fullName>
    </alternativeName>
</protein>
<comment type="function">
    <text evidence="1">Catalyzes the reversible transfer of the terminal phosphate group between ATP and AMP. Plays an important role in cellular energy homeostasis and in adenine nucleotide metabolism.</text>
</comment>
<comment type="catalytic activity">
    <reaction evidence="1">
        <text>AMP + ATP = 2 ADP</text>
        <dbReference type="Rhea" id="RHEA:12973"/>
        <dbReference type="ChEBI" id="CHEBI:30616"/>
        <dbReference type="ChEBI" id="CHEBI:456215"/>
        <dbReference type="ChEBI" id="CHEBI:456216"/>
        <dbReference type="EC" id="2.7.4.3"/>
    </reaction>
</comment>
<comment type="pathway">
    <text evidence="1">Purine metabolism; AMP biosynthesis via salvage pathway; AMP from ADP: step 1/1.</text>
</comment>
<comment type="subunit">
    <text evidence="1">Monomer.</text>
</comment>
<comment type="subcellular location">
    <subcellularLocation>
        <location evidence="1">Cytoplasm</location>
    </subcellularLocation>
</comment>
<comment type="domain">
    <text evidence="1">Consists of three domains, a large central CORE domain and two small peripheral domains, NMPbind and LID, which undergo movements during catalysis. The LID domain closes over the site of phosphoryl transfer upon ATP binding. Assembling and dissambling the active center during each catalytic cycle provides an effective means to prevent ATP hydrolysis. Some bacteria have evolved a zinc-coordinating structure that stabilizes the LID domain.</text>
</comment>
<comment type="similarity">
    <text evidence="1">Belongs to the adenylate kinase family.</text>
</comment>
<name>KAD_STAES</name>
<gene>
    <name evidence="1" type="primary">adk</name>
    <name type="ordered locus">SE_1802</name>
</gene>
<proteinExistence type="inferred from homology"/>
<evidence type="ECO:0000255" key="1">
    <source>
        <dbReference type="HAMAP-Rule" id="MF_00235"/>
    </source>
</evidence>
<accession>Q8CRI0</accession>
<dbReference type="EC" id="2.7.4.3" evidence="1"/>
<dbReference type="EMBL" id="AE015929">
    <property type="protein sequence ID" value="AAO05443.1"/>
    <property type="molecule type" value="Genomic_DNA"/>
</dbReference>
<dbReference type="RefSeq" id="NP_765357.1">
    <property type="nucleotide sequence ID" value="NC_004461.1"/>
</dbReference>
<dbReference type="RefSeq" id="WP_001829774.1">
    <property type="nucleotide sequence ID" value="NZ_WBME01000007.1"/>
</dbReference>
<dbReference type="SMR" id="Q8CRI0"/>
<dbReference type="KEGG" id="sep:SE_1802"/>
<dbReference type="PATRIC" id="fig|176280.10.peg.1759"/>
<dbReference type="eggNOG" id="COG0563">
    <property type="taxonomic scope" value="Bacteria"/>
</dbReference>
<dbReference type="HOGENOM" id="CLU_032354_1_2_9"/>
<dbReference type="OrthoDB" id="9805030at2"/>
<dbReference type="UniPathway" id="UPA00588">
    <property type="reaction ID" value="UER00649"/>
</dbReference>
<dbReference type="Proteomes" id="UP000001411">
    <property type="component" value="Chromosome"/>
</dbReference>
<dbReference type="GO" id="GO:0005737">
    <property type="term" value="C:cytoplasm"/>
    <property type="evidence" value="ECO:0007669"/>
    <property type="project" value="UniProtKB-SubCell"/>
</dbReference>
<dbReference type="GO" id="GO:0004017">
    <property type="term" value="F:adenylate kinase activity"/>
    <property type="evidence" value="ECO:0007669"/>
    <property type="project" value="UniProtKB-UniRule"/>
</dbReference>
<dbReference type="GO" id="GO:0005524">
    <property type="term" value="F:ATP binding"/>
    <property type="evidence" value="ECO:0007669"/>
    <property type="project" value="UniProtKB-UniRule"/>
</dbReference>
<dbReference type="GO" id="GO:0008270">
    <property type="term" value="F:zinc ion binding"/>
    <property type="evidence" value="ECO:0007669"/>
    <property type="project" value="UniProtKB-UniRule"/>
</dbReference>
<dbReference type="GO" id="GO:0044209">
    <property type="term" value="P:AMP salvage"/>
    <property type="evidence" value="ECO:0007669"/>
    <property type="project" value="UniProtKB-UniRule"/>
</dbReference>
<dbReference type="CDD" id="cd01428">
    <property type="entry name" value="ADK"/>
    <property type="match status" value="1"/>
</dbReference>
<dbReference type="FunFam" id="3.40.50.300:FF:000106">
    <property type="entry name" value="Adenylate kinase mitochondrial"/>
    <property type="match status" value="1"/>
</dbReference>
<dbReference type="Gene3D" id="3.40.50.300">
    <property type="entry name" value="P-loop containing nucleotide triphosphate hydrolases"/>
    <property type="match status" value="1"/>
</dbReference>
<dbReference type="HAMAP" id="MF_00235">
    <property type="entry name" value="Adenylate_kinase_Adk"/>
    <property type="match status" value="1"/>
</dbReference>
<dbReference type="InterPro" id="IPR006259">
    <property type="entry name" value="Adenyl_kin_sub"/>
</dbReference>
<dbReference type="InterPro" id="IPR000850">
    <property type="entry name" value="Adenylat/UMP-CMP_kin"/>
</dbReference>
<dbReference type="InterPro" id="IPR033690">
    <property type="entry name" value="Adenylat_kinase_CS"/>
</dbReference>
<dbReference type="InterPro" id="IPR007862">
    <property type="entry name" value="Adenylate_kinase_lid-dom"/>
</dbReference>
<dbReference type="InterPro" id="IPR008144">
    <property type="entry name" value="Guanylate_kin-like_dom"/>
</dbReference>
<dbReference type="InterPro" id="IPR027417">
    <property type="entry name" value="P-loop_NTPase"/>
</dbReference>
<dbReference type="NCBIfam" id="TIGR01351">
    <property type="entry name" value="adk"/>
    <property type="match status" value="1"/>
</dbReference>
<dbReference type="NCBIfam" id="NF001380">
    <property type="entry name" value="PRK00279.1-2"/>
    <property type="match status" value="1"/>
</dbReference>
<dbReference type="NCBIfam" id="NF001381">
    <property type="entry name" value="PRK00279.1-3"/>
    <property type="match status" value="1"/>
</dbReference>
<dbReference type="NCBIfam" id="NF011100">
    <property type="entry name" value="PRK14527.1"/>
    <property type="match status" value="1"/>
</dbReference>
<dbReference type="PANTHER" id="PTHR23359">
    <property type="entry name" value="NUCLEOTIDE KINASE"/>
    <property type="match status" value="1"/>
</dbReference>
<dbReference type="Pfam" id="PF00406">
    <property type="entry name" value="ADK"/>
    <property type="match status" value="1"/>
</dbReference>
<dbReference type="Pfam" id="PF05191">
    <property type="entry name" value="ADK_lid"/>
    <property type="match status" value="1"/>
</dbReference>
<dbReference type="PRINTS" id="PR00094">
    <property type="entry name" value="ADENYLTKNASE"/>
</dbReference>
<dbReference type="SUPFAM" id="SSF52540">
    <property type="entry name" value="P-loop containing nucleoside triphosphate hydrolases"/>
    <property type="match status" value="1"/>
</dbReference>
<dbReference type="PROSITE" id="PS00113">
    <property type="entry name" value="ADENYLATE_KINASE"/>
    <property type="match status" value="1"/>
</dbReference>
<feature type="chain" id="PRO_0000158851" description="Adenylate kinase">
    <location>
        <begin position="1"/>
        <end position="215"/>
    </location>
</feature>
<feature type="region of interest" description="NMP" evidence="1">
    <location>
        <begin position="30"/>
        <end position="59"/>
    </location>
</feature>
<feature type="region of interest" description="LID" evidence="1">
    <location>
        <begin position="126"/>
        <end position="163"/>
    </location>
</feature>
<feature type="binding site" evidence="1">
    <location>
        <begin position="10"/>
        <end position="15"/>
    </location>
    <ligand>
        <name>ATP</name>
        <dbReference type="ChEBI" id="CHEBI:30616"/>
    </ligand>
</feature>
<feature type="binding site" evidence="1">
    <location>
        <position position="31"/>
    </location>
    <ligand>
        <name>AMP</name>
        <dbReference type="ChEBI" id="CHEBI:456215"/>
    </ligand>
</feature>
<feature type="binding site" evidence="1">
    <location>
        <position position="36"/>
    </location>
    <ligand>
        <name>AMP</name>
        <dbReference type="ChEBI" id="CHEBI:456215"/>
    </ligand>
</feature>
<feature type="binding site" evidence="1">
    <location>
        <begin position="57"/>
        <end position="59"/>
    </location>
    <ligand>
        <name>AMP</name>
        <dbReference type="ChEBI" id="CHEBI:456215"/>
    </ligand>
</feature>
<feature type="binding site" evidence="1">
    <location>
        <begin position="85"/>
        <end position="88"/>
    </location>
    <ligand>
        <name>AMP</name>
        <dbReference type="ChEBI" id="CHEBI:456215"/>
    </ligand>
</feature>
<feature type="binding site" evidence="1">
    <location>
        <position position="92"/>
    </location>
    <ligand>
        <name>AMP</name>
        <dbReference type="ChEBI" id="CHEBI:456215"/>
    </ligand>
</feature>
<feature type="binding site" evidence="1">
    <location>
        <position position="127"/>
    </location>
    <ligand>
        <name>ATP</name>
        <dbReference type="ChEBI" id="CHEBI:30616"/>
    </ligand>
</feature>
<feature type="binding site" evidence="1">
    <location>
        <position position="130"/>
    </location>
    <ligand>
        <name>Zn(2+)</name>
        <dbReference type="ChEBI" id="CHEBI:29105"/>
        <note>structural</note>
    </ligand>
</feature>
<feature type="binding site" evidence="1">
    <location>
        <position position="133"/>
    </location>
    <ligand>
        <name>Zn(2+)</name>
        <dbReference type="ChEBI" id="CHEBI:29105"/>
        <note>structural</note>
    </ligand>
</feature>
<feature type="binding site" evidence="1">
    <location>
        <begin position="136"/>
        <end position="137"/>
    </location>
    <ligand>
        <name>ATP</name>
        <dbReference type="ChEBI" id="CHEBI:30616"/>
    </ligand>
</feature>
<feature type="binding site" evidence="1">
    <location>
        <position position="150"/>
    </location>
    <ligand>
        <name>Zn(2+)</name>
        <dbReference type="ChEBI" id="CHEBI:29105"/>
        <note>structural</note>
    </ligand>
</feature>
<feature type="binding site" evidence="1">
    <location>
        <position position="153"/>
    </location>
    <ligand>
        <name>Zn(2+)</name>
        <dbReference type="ChEBI" id="CHEBI:29105"/>
        <note>structural</note>
    </ligand>
</feature>
<feature type="binding site" evidence="1">
    <location>
        <position position="160"/>
    </location>
    <ligand>
        <name>AMP</name>
        <dbReference type="ChEBI" id="CHEBI:456215"/>
    </ligand>
</feature>
<feature type="binding site" evidence="1">
    <location>
        <position position="171"/>
    </location>
    <ligand>
        <name>AMP</name>
        <dbReference type="ChEBI" id="CHEBI:456215"/>
    </ligand>
</feature>
<feature type="binding site" evidence="1">
    <location>
        <position position="199"/>
    </location>
    <ligand>
        <name>ATP</name>
        <dbReference type="ChEBI" id="CHEBI:30616"/>
    </ligand>
</feature>